<proteinExistence type="evidence at protein level"/>
<feature type="chain" id="PRO_0000380247" description="Tektin-3">
    <location>
        <begin position="1"/>
        <end position="490"/>
    </location>
</feature>
<feature type="coiled-coil region" evidence="4">
    <location>
        <begin position="419"/>
        <end position="456"/>
    </location>
</feature>
<feature type="glycosylation site" description="O-linked (GalNAc...) threonine" evidence="4">
    <location>
        <position position="7"/>
    </location>
</feature>
<feature type="glycosylation site" description="O-linked (GalNAc...) threonine" evidence="4">
    <location>
        <position position="9"/>
    </location>
</feature>
<feature type="glycosylation site" description="N-linked (GlcNAc...) asparagine" evidence="4">
    <location>
        <position position="41"/>
    </location>
</feature>
<feature type="glycosylation site" description="N-linked (GlcNAc...) asparagine" evidence="4">
    <location>
        <position position="86"/>
    </location>
</feature>
<feature type="glycosylation site" description="N-linked (GlcNAc...) asparagine" evidence="4">
    <location>
        <position position="111"/>
    </location>
</feature>
<feature type="glycosylation site" description="N-linked (GlcNAc...) asparagine" evidence="4">
    <location>
        <position position="276"/>
    </location>
</feature>
<name>TEKT3_RAT</name>
<protein>
    <recommendedName>
        <fullName>Tektin-3</fullName>
    </recommendedName>
</protein>
<accession>Q4V8G8</accession>
<dbReference type="EMBL" id="BC097398">
    <property type="protein sequence ID" value="AAH97398.1"/>
    <property type="molecule type" value="mRNA"/>
</dbReference>
<dbReference type="RefSeq" id="NP_001019910.1">
    <property type="nucleotide sequence ID" value="NM_001024739.1"/>
</dbReference>
<dbReference type="SMR" id="Q4V8G8"/>
<dbReference type="FunCoup" id="Q4V8G8">
    <property type="interactions" value="69"/>
</dbReference>
<dbReference type="STRING" id="10116.ENSRNOP00000031637"/>
<dbReference type="GlyCosmos" id="Q4V8G8">
    <property type="glycosylation" value="6 sites, No reported glycans"/>
</dbReference>
<dbReference type="GlyGen" id="Q4V8G8">
    <property type="glycosylation" value="6 sites"/>
</dbReference>
<dbReference type="iPTMnet" id="Q4V8G8"/>
<dbReference type="PhosphoSitePlus" id="Q4V8G8"/>
<dbReference type="PaxDb" id="10116-ENSRNOP00000031637"/>
<dbReference type="Ensembl" id="ENSRNOT00000038276.6">
    <property type="protein sequence ID" value="ENSRNOP00000031637.4"/>
    <property type="gene ID" value="ENSRNOG00000027212.6"/>
</dbReference>
<dbReference type="GeneID" id="287392"/>
<dbReference type="KEGG" id="rno:287392"/>
<dbReference type="UCSC" id="RGD:1310582">
    <property type="organism name" value="rat"/>
</dbReference>
<dbReference type="AGR" id="RGD:1310582"/>
<dbReference type="CTD" id="64518"/>
<dbReference type="RGD" id="1310582">
    <property type="gene designation" value="Tekt3"/>
</dbReference>
<dbReference type="eggNOG" id="KOG2685">
    <property type="taxonomic scope" value="Eukaryota"/>
</dbReference>
<dbReference type="GeneTree" id="ENSGT00950000182894"/>
<dbReference type="HOGENOM" id="CLU_033588_2_1_1"/>
<dbReference type="InParanoid" id="Q4V8G8"/>
<dbReference type="OMA" id="CMEPISG"/>
<dbReference type="OrthoDB" id="9886517at2759"/>
<dbReference type="PhylomeDB" id="Q4V8G8"/>
<dbReference type="TreeFam" id="TF320754"/>
<dbReference type="PRO" id="PR:Q4V8G8"/>
<dbReference type="Proteomes" id="UP000002494">
    <property type="component" value="Chromosome 10"/>
</dbReference>
<dbReference type="Bgee" id="ENSRNOG00000027212">
    <property type="expression patterns" value="Expressed in testis and 8 other cell types or tissues"/>
</dbReference>
<dbReference type="GO" id="GO:0002080">
    <property type="term" value="C:acrosomal membrane"/>
    <property type="evidence" value="ECO:0000314"/>
    <property type="project" value="UniProtKB"/>
</dbReference>
<dbReference type="GO" id="GO:0001669">
    <property type="term" value="C:acrosomal vesicle"/>
    <property type="evidence" value="ECO:0000266"/>
    <property type="project" value="RGD"/>
</dbReference>
<dbReference type="GO" id="GO:0160111">
    <property type="term" value="C:axonemal A tubule inner sheath"/>
    <property type="evidence" value="ECO:0000250"/>
    <property type="project" value="UniProtKB"/>
</dbReference>
<dbReference type="GO" id="GO:0005879">
    <property type="term" value="C:axonemal microtubule"/>
    <property type="evidence" value="ECO:0000250"/>
    <property type="project" value="UniProtKB"/>
</dbReference>
<dbReference type="GO" id="GO:0005737">
    <property type="term" value="C:cytoplasm"/>
    <property type="evidence" value="ECO:0000266"/>
    <property type="project" value="RGD"/>
</dbReference>
<dbReference type="GO" id="GO:0015630">
    <property type="term" value="C:microtubule cytoskeleton"/>
    <property type="evidence" value="ECO:0000318"/>
    <property type="project" value="GO_Central"/>
</dbReference>
<dbReference type="GO" id="GO:0002081">
    <property type="term" value="C:outer acrosomal membrane"/>
    <property type="evidence" value="ECO:0007669"/>
    <property type="project" value="UniProtKB-SubCell"/>
</dbReference>
<dbReference type="GO" id="GO:0036126">
    <property type="term" value="C:sperm flagellum"/>
    <property type="evidence" value="ECO:0000314"/>
    <property type="project" value="UniProtKB"/>
</dbReference>
<dbReference type="GO" id="GO:0060271">
    <property type="term" value="P:cilium assembly"/>
    <property type="evidence" value="ECO:0000250"/>
    <property type="project" value="CAFA"/>
</dbReference>
<dbReference type="GO" id="GO:0060294">
    <property type="term" value="P:cilium movement involved in cell motility"/>
    <property type="evidence" value="ECO:0000318"/>
    <property type="project" value="GO_Central"/>
</dbReference>
<dbReference type="GO" id="GO:0030317">
    <property type="term" value="P:flagellated sperm motility"/>
    <property type="evidence" value="ECO:0000250"/>
    <property type="project" value="CAFA"/>
</dbReference>
<dbReference type="GO" id="GO:0060378">
    <property type="term" value="P:regulation of brood size"/>
    <property type="evidence" value="ECO:0000250"/>
    <property type="project" value="CAFA"/>
</dbReference>
<dbReference type="InterPro" id="IPR048256">
    <property type="entry name" value="Tektin-like"/>
</dbReference>
<dbReference type="InterPro" id="IPR000435">
    <property type="entry name" value="Tektins"/>
</dbReference>
<dbReference type="PANTHER" id="PTHR19960">
    <property type="entry name" value="TEKTIN"/>
    <property type="match status" value="1"/>
</dbReference>
<dbReference type="PANTHER" id="PTHR19960:SF24">
    <property type="entry name" value="TEKTIN-3"/>
    <property type="match status" value="1"/>
</dbReference>
<dbReference type="Pfam" id="PF03148">
    <property type="entry name" value="Tektin"/>
    <property type="match status" value="1"/>
</dbReference>
<dbReference type="PRINTS" id="PR00511">
    <property type="entry name" value="TEKTIN"/>
</dbReference>
<organism>
    <name type="scientific">Rattus norvegicus</name>
    <name type="common">Rat</name>
    <dbReference type="NCBI Taxonomy" id="10116"/>
    <lineage>
        <taxon>Eukaryota</taxon>
        <taxon>Metazoa</taxon>
        <taxon>Chordata</taxon>
        <taxon>Craniata</taxon>
        <taxon>Vertebrata</taxon>
        <taxon>Euteleostomi</taxon>
        <taxon>Mammalia</taxon>
        <taxon>Eutheria</taxon>
        <taxon>Euarchontoglires</taxon>
        <taxon>Glires</taxon>
        <taxon>Rodentia</taxon>
        <taxon>Myomorpha</taxon>
        <taxon>Muroidea</taxon>
        <taxon>Muridae</taxon>
        <taxon>Murinae</taxon>
        <taxon>Rattus</taxon>
    </lineage>
</organism>
<sequence length="490" mass="56416">MEPLGSTLTATYAHPQPAATNFLPAIGTLTSSYRNRFPHRNLTHSLSLPWRPSTYYKTAYNYPTLAPLSSTSQSVCESTMLPFVSNRTTLFTRYTPDDWYRSTLVGFQESNCSRHNSERLRVDTSRLIQDKYQQIRKTQADSTQNLGERVNDIAFWKSEIIHELDEMIGETNALTDIKRRLERGLIETDAPLQVARECLFHREKRMGIDLVHDEAEKELLTEVETVLCCQERMRRHLDKAIAQLASDRSAQHELEKDLSDKQAALRIDDKCKHLRNTSQGVSYFRGVENVDATVSVPESWAKFTDDNVLRSQSERAASAKLREDTENLLIVIANEMWNQFNKVNVAFTNRIAETVDAKNKIHIHLSKTLQEIFQTEMAIESIRKAIKEKSAFLKVAQTRLDERTRRPNIELCRDIAQLRLVNEVYEVDETIQTLQQRLRDSEDTLQSLAHTKATLEHDLAVKANTLYIDQEKCMSMRNSYPSTLRLVGFC</sequence>
<keyword id="KW-0966">Cell projection</keyword>
<keyword id="KW-0969">Cilium</keyword>
<keyword id="KW-0175">Coiled coil</keyword>
<keyword id="KW-0963">Cytoplasm</keyword>
<keyword id="KW-0968">Cytoplasmic vesicle</keyword>
<keyword id="KW-0206">Cytoskeleton</keyword>
<keyword id="KW-0282">Flagellum</keyword>
<keyword id="KW-0325">Glycoprotein</keyword>
<keyword id="KW-0472">Membrane</keyword>
<keyword id="KW-1185">Reference proteome</keyword>
<keyword id="KW-0832">Ubl conjugation</keyword>
<reference key="1">
    <citation type="journal article" date="2004" name="Genome Res.">
        <title>The status, quality, and expansion of the NIH full-length cDNA project: the Mammalian Gene Collection (MGC).</title>
        <authorList>
            <consortium name="The MGC Project Team"/>
        </authorList>
    </citation>
    <scope>NUCLEOTIDE SEQUENCE [LARGE SCALE MRNA]</scope>
    <source>
        <tissue>Testis</tissue>
    </source>
</reference>
<reference key="2">
    <citation type="journal article" date="2009" name="Reproduction">
        <title>Identification of novel immunodominant epididymal sperm proteins using combinatorial approach.</title>
        <authorList>
            <person name="Khan S.A."/>
            <person name="Suryawanshi A.R."/>
            <person name="Ranpura S.A."/>
            <person name="Jadhav S.V."/>
            <person name="Khole V.V."/>
        </authorList>
    </citation>
    <scope>IDENTIFICATION BY MASS SPECTROMETRY</scope>
    <scope>SUBCELLULAR LOCATION</scope>
    <scope>TISSUE SPECIFICITY</scope>
</reference>
<reference key="3">
    <citation type="journal article" date="2011" name="Mol. Reprod. Dev.">
        <title>Characterization and subcellular localization of Tektin 3 in rat spermatozoa.</title>
        <authorList>
            <person name="Takiguchi H."/>
            <person name="Murayama E."/>
            <person name="Kaneko T."/>
            <person name="Kurio H."/>
            <person name="Toshimori K."/>
            <person name="Iida H."/>
        </authorList>
    </citation>
    <scope>SUBCELLULAR LOCATION</scope>
    <scope>TISSUE SPECIFICITY</scope>
</reference>
<comment type="function">
    <text evidence="1 2">Microtubule inner protein (MIP) part of the dynein-decorated doublet microtubules (DMTs) in cilia and flagellar axoneme. Forms filamentous polymers in the walls of ciliary and flagellar microtubules (By similarity). Required for normal sperm mobility (By similarity).</text>
</comment>
<comment type="subunit">
    <text evidence="2 3">Microtubule inner protein component of sperm flagellar doublet microtubules (By similarity). Interacts with TEKT1, TEKT2, TEKT4 and TEKT5 (By similarity). Interacts with CCDC38 (By similarity).</text>
</comment>
<comment type="subcellular location">
    <subcellularLocation>
        <location evidence="1">Cytoplasm</location>
        <location evidence="1">Cytoskeleton</location>
        <location evidence="1">Cilium axoneme</location>
    </subcellularLocation>
    <subcellularLocation>
        <location evidence="5 6">Cytoplasm</location>
        <location evidence="5 6">Cytoskeleton</location>
        <location evidence="5 6">Flagellum axoneme</location>
    </subcellularLocation>
    <subcellularLocation>
        <location evidence="6">Cytoplasmic vesicle</location>
        <location evidence="6">Secretory vesicle</location>
        <location evidence="6">Acrosome outer membrane</location>
        <topology evidence="7">Peripheral membrane protein</topology>
    </subcellularLocation>
    <text evidence="1 3 6">In spermatozoa, preferentially localizes to the flagella, but also found in the head (By similarity). In the sperm flagellum, localizes to the periaxonemal region where it associates with the mitochondrial sheath and outer dense fibers (PubMed:21744413). Not detected in the central axonemal region of the flagellum (PubMed:21744413). Associates with the acrosome membrane in the equatorial segment of the sperm head (PubMed:21744413). Also detected just below the plasma membrane in the post-acrosomal region where it might localize to the postacrosomal dense lamina (By similarity). However, other studies report little or no expression in the postacrosomal region (PubMed:21744413). Translocates from the postacrosomal region to the equatorial segment after sperm activation (By similarity). Retained in the postacromal region, but not the equatorial segment, following the acrosome reaction (By similarity). Some studies report strong expression in the anterior cap region (By similarity). However, other studies report little or no expression in the acrosomal cap (By similarity).</text>
</comment>
<comment type="tissue specificity">
    <text evidence="5 6">Expressed in epididymal sperm (at protein level).</text>
</comment>
<comment type="PTM">
    <text evidence="1">N- and O-glycosylated.</text>
</comment>
<comment type="PTM">
    <text evidence="1">May be proteolytically processed during the epididymal transit of spermatozoa.</text>
</comment>
<comment type="PTM">
    <text evidence="2">Ubiquitinated, leading to its degradation. Deubiquitinated by USP16, promoting its stability.</text>
</comment>
<comment type="similarity">
    <text evidence="7">Belongs to the tektin family.</text>
</comment>
<evidence type="ECO:0000250" key="1">
    <source>
        <dbReference type="UniProtKB" id="A6H782"/>
    </source>
</evidence>
<evidence type="ECO:0000250" key="2">
    <source>
        <dbReference type="UniProtKB" id="Q6X6Z7"/>
    </source>
</evidence>
<evidence type="ECO:0000250" key="3">
    <source>
        <dbReference type="UniProtKB" id="Q9BXF9"/>
    </source>
</evidence>
<evidence type="ECO:0000255" key="4"/>
<evidence type="ECO:0000269" key="5">
    <source>
    </source>
</evidence>
<evidence type="ECO:0000269" key="6">
    <source>
    </source>
</evidence>
<evidence type="ECO:0000305" key="7"/>
<gene>
    <name type="primary">Tekt3</name>
</gene>